<comment type="function">
    <text evidence="2 3 6 8">Catalytic subunit of a constitutively active serine/threonine-protein kinase complex that phosphorylates a large number of substrates containing acidic residues C-terminal to the phosphorylated serine or threonine (By similarity). Regulates numerous cellular processes, such as cell cycle progression, apoptosis and transcription, as well as viral infection (By similarity). May act as a regulatory node which integrates and coordinates numerous signals leading to an appropriate cellular response (By similarity). During mitosis, functions as a component of the p53/TP53-dependent spindle assembly checkpoint (SAC) that maintains cyclin-B-CDK1 activity and G2 arrest in response to spindle damage (By similarity). Also required for p53/TP53-mediated apoptosis, phosphorylating 'Ser-392' of p53/TP53 following UV irradiation (By similarity). Phosphorylates a number of DNA repair proteins in response to DNA damage, such as MDC1, MRE11, RAD9A, RAD51 and HTATSF1, promoting their recruitment to DNA damage sites (By similarity). Can also negatively regulate apoptosis (PubMed:18467326). Phosphorylates the caspases CASP9 and CASP2 and the apoptotic regulator NOL3 (PubMed:18467326). Phosphorylation protects CASP9 from cleavage and activation by CASP8, and inhibits the dimerization of CASP2 and activation of CASP8 (PubMed:18467326). Phosphorylates YY1, protecting YY1 from cleavage by CASP7 during apoptosis (By similarity). Regulates transcription by direct phosphorylation of RNA polymerases I, II, III and IV (By similarity). Also phosphorylates and regulates numerous transcription factors including NF-kappa-B, STAT1, CREB1, IRF1, IRF2, ATF1, ATF4, SRF, MAX, JUN, FOS, MYC and MYB (By similarity). Phosphorylates Hsp90 and its co-chaperones FKBP4 and CDC37, which is essential for chaperone function (By similarity). Mediates sequential phosphorylation of FNIP1, promoting its gradual interaction with Hsp90, leading to activate both kinase and non-kinase client proteins of Hsp90 (By similarity). Regulates Wnt signaling by phosphorylating CTNNB1 and the transcription factor LEF1 (PubMed:10806215). Acts as an ectokinase that phosphorylates several extracellular proteins (By similarity). Phosphorylates PML at 'Ser-565' and primes it for ubiquitin-mediated degradation (By similarity). Plays an important role in the circadian clock function by phosphorylating BMAL1 at 'Ser-90' which is pivotal for its interaction with CLOCK and which controls CLOCK nuclear entry (By similarity). Phosphorylates FMR1, promoting FMR1-dependent formation of a membraneless compartment (By similarity). May phosphorylate histone H2A on 'Ser-1' (By similarity).</text>
</comment>
<comment type="catalytic activity">
    <reaction evidence="3">
        <text>L-seryl-[protein] + ATP = O-phospho-L-seryl-[protein] + ADP + H(+)</text>
        <dbReference type="Rhea" id="RHEA:17989"/>
        <dbReference type="Rhea" id="RHEA-COMP:9863"/>
        <dbReference type="Rhea" id="RHEA-COMP:11604"/>
        <dbReference type="ChEBI" id="CHEBI:15378"/>
        <dbReference type="ChEBI" id="CHEBI:29999"/>
        <dbReference type="ChEBI" id="CHEBI:30616"/>
        <dbReference type="ChEBI" id="CHEBI:83421"/>
        <dbReference type="ChEBI" id="CHEBI:456216"/>
        <dbReference type="EC" id="2.7.11.1"/>
    </reaction>
    <physiologicalReaction direction="left-to-right" evidence="3">
        <dbReference type="Rhea" id="RHEA:17990"/>
    </physiologicalReaction>
</comment>
<comment type="catalytic activity">
    <reaction evidence="3">
        <text>L-threonyl-[protein] + ATP = O-phospho-L-threonyl-[protein] + ADP + H(+)</text>
        <dbReference type="Rhea" id="RHEA:46608"/>
        <dbReference type="Rhea" id="RHEA-COMP:11060"/>
        <dbReference type="Rhea" id="RHEA-COMP:11605"/>
        <dbReference type="ChEBI" id="CHEBI:15378"/>
        <dbReference type="ChEBI" id="CHEBI:30013"/>
        <dbReference type="ChEBI" id="CHEBI:30616"/>
        <dbReference type="ChEBI" id="CHEBI:61977"/>
        <dbReference type="ChEBI" id="CHEBI:456216"/>
        <dbReference type="EC" id="2.7.11.1"/>
    </reaction>
</comment>
<comment type="activity regulation">
    <text evidence="1">Constitutively active protein kinase whose activity is not directly affected by phosphorylation. Seems to be regulated by level of expression and localization (By similarity).</text>
</comment>
<comment type="subunit">
    <text evidence="3 9">Heterotetramer composed of two catalytic subunits (alpha chain and/or alpha' chain) and two regulatory subunits (beta chains). The tetramer can exist as a combination of 2 alpha/2 beta, 2 alpha'/2 beta or 1 alpha/1 alpha'/2 beta subunits. Also part of a CK2-SPT16-SSRP1 complex composed of SSRP1, SUPT16H, CSNK2A1, CSNK2A2 and CSNK2B, which forms following UV irradiation (By similarity). Interacts with RNPS1 (By similarity). Interacts with SNAI1 (PubMed:19923321). Interacts with PML. Interacts with CCAR2. Interacts with HIRIP3 (By similarity).</text>
</comment>
<comment type="interaction">
    <interactant intactId="EBI-771698">
        <id>Q60737</id>
    </interactant>
    <interactant intactId="EBI-644534">
        <id>Q9WTL8</id>
        <label>Bmal1</label>
    </interactant>
    <organismsDiffer>false</organismsDiffer>
    <experiments>5</experiments>
</comment>
<comment type="interaction">
    <interactant intactId="EBI-771698">
        <id>Q60737</id>
    </interactant>
    <interactant intactId="EBI-348179">
        <id>P67871</id>
        <label>Csnk2b</label>
    </interactant>
    <organismsDiffer>false</organismsDiffer>
    <experiments>5</experiments>
</comment>
<comment type="subcellular location">
    <subcellularLocation>
        <location evidence="3">Nucleus</location>
    </subcellularLocation>
</comment>
<comment type="PTM">
    <text evidence="1">Phosphorylated at Thr-344, Thr-360, Ser-362 and Ser-370 by CDK1 in prophase and metaphase and dephosphorylated during anaphase. Phosphorylation does not directly affect casein kinase 2 activity, but may contribute to its regulation by forming binding sites for interacting proteins and/or targeting it to different compartments (By similarity).</text>
</comment>
<comment type="disruption phenotype">
    <text evidence="7">Embryonic lethality at 10.5 dpc.</text>
</comment>
<comment type="miscellaneous">
    <text>Can use both ATP and GTP as phosphoryl donors. Phosphorylation by casein kinase 2 has been estimated to represent up to one quarter of the eukaryotic phosphoproteome.</text>
</comment>
<comment type="similarity">
    <text evidence="4">Belongs to the protein kinase superfamily. Ser/Thr protein kinase family. CK2 subfamily.</text>
</comment>
<keyword id="KW-0053">Apoptosis</keyword>
<keyword id="KW-0067">ATP-binding</keyword>
<keyword id="KW-0090">Biological rhythms</keyword>
<keyword id="KW-0131">Cell cycle</keyword>
<keyword id="KW-0418">Kinase</keyword>
<keyword id="KW-0547">Nucleotide-binding</keyword>
<keyword id="KW-0539">Nucleus</keyword>
<keyword id="KW-0597">Phosphoprotein</keyword>
<keyword id="KW-1185">Reference proteome</keyword>
<keyword id="KW-0723">Serine/threonine-protein kinase</keyword>
<keyword id="KW-0804">Transcription</keyword>
<keyword id="KW-0805">Transcription regulation</keyword>
<keyword id="KW-0808">Transferase</keyword>
<keyword id="KW-0879">Wnt signaling pathway</keyword>
<protein>
    <recommendedName>
        <fullName>Casein kinase II subunit alpha</fullName>
        <shortName>CK II alpha</shortName>
        <ecNumber evidence="3">2.7.11.1</ecNumber>
    </recommendedName>
</protein>
<proteinExistence type="evidence at protein level"/>
<gene>
    <name type="primary">Csnk2a1</name>
    <name type="synonym">Ckiia</name>
</gene>
<feature type="chain" id="PRO_0000085884" description="Casein kinase II subunit alpha">
    <location>
        <begin position="1"/>
        <end position="391"/>
    </location>
</feature>
<feature type="domain" description="Protein kinase" evidence="4">
    <location>
        <begin position="39"/>
        <end position="324"/>
    </location>
</feature>
<feature type="region of interest" description="Interaction with beta subunit" evidence="1">
    <location>
        <begin position="36"/>
        <end position="41"/>
    </location>
</feature>
<feature type="active site" description="Proton acceptor" evidence="4 5">
    <location>
        <position position="156"/>
    </location>
</feature>
<feature type="binding site" evidence="4">
    <location>
        <begin position="45"/>
        <end position="53"/>
    </location>
    <ligand>
        <name>ATP</name>
        <dbReference type="ChEBI" id="CHEBI:30616"/>
    </ligand>
</feature>
<feature type="binding site" evidence="4">
    <location>
        <position position="68"/>
    </location>
    <ligand>
        <name>ATP</name>
        <dbReference type="ChEBI" id="CHEBI:30616"/>
    </ligand>
</feature>
<feature type="modified residue" description="Phosphothreonine; by CDK1" evidence="3">
    <location>
        <position position="344"/>
    </location>
</feature>
<feature type="modified residue" description="Phosphothreonine; by CDK1" evidence="3">
    <location>
        <position position="360"/>
    </location>
</feature>
<feature type="modified residue" description="Phosphoserine; by CDK1" evidence="3">
    <location>
        <position position="362"/>
    </location>
</feature>
<feature type="modified residue" description="Phosphoserine; by CDK1" evidence="3">
    <location>
        <position position="370"/>
    </location>
</feature>
<feature type="sequence conflict" description="In Ref. 1; AAA64563." evidence="10" ref="1">
    <original>A</original>
    <variation>V</variation>
    <location>
        <position position="315"/>
    </location>
</feature>
<feature type="sequence conflict" description="In Ref. 1; AAA64563." evidence="10" ref="1">
    <original>Y</original>
    <variation>F</variation>
    <location>
        <position position="323"/>
    </location>
</feature>
<feature type="sequence conflict" description="In Ref. 1; AAA64563." evidence="10" ref="1">
    <original>D</original>
    <variation>N</variation>
    <location>
        <position position="330"/>
    </location>
</feature>
<feature type="sequence conflict" description="In Ref. 1; AAA64563." evidence="10" ref="1">
    <original>T</original>
    <variation>S</variation>
    <location>
        <position position="360"/>
    </location>
</feature>
<feature type="sequence conflict" description="In Ref. 1; AAA64563." evidence="10" ref="1">
    <original>P</original>
    <variation>Q</variation>
    <location>
        <position position="384"/>
    </location>
</feature>
<name>CSK21_MOUSE</name>
<evidence type="ECO:0000250" key="1"/>
<evidence type="ECO:0000250" key="2">
    <source>
        <dbReference type="UniProtKB" id="P19139"/>
    </source>
</evidence>
<evidence type="ECO:0000250" key="3">
    <source>
        <dbReference type="UniProtKB" id="P68400"/>
    </source>
</evidence>
<evidence type="ECO:0000255" key="4">
    <source>
        <dbReference type="PROSITE-ProRule" id="PRU00159"/>
    </source>
</evidence>
<evidence type="ECO:0000255" key="5">
    <source>
        <dbReference type="PROSITE-ProRule" id="PRU10027"/>
    </source>
</evidence>
<evidence type="ECO:0000269" key="6">
    <source>
    </source>
</evidence>
<evidence type="ECO:0000269" key="7">
    <source>
    </source>
</evidence>
<evidence type="ECO:0000269" key="8">
    <source>
    </source>
</evidence>
<evidence type="ECO:0000269" key="9">
    <source>
    </source>
</evidence>
<evidence type="ECO:0000305" key="10"/>
<sequence length="391" mass="45134">MSGPVPSRARVYTDVNTHRPREYWDYESHVVEWGNQDDYQLVRKLGRGKYSEVFEAINITNNEKVVVKILKPVKKKKIKREIKILENLRGGPNIITLADIVKDPVSRTPALVFEHVNNTDFKQLYQTLTDYDIRFYMYEILKALDYCHSMGIMHRDVKPHNVMIDHEHRKLRLIDWGLAEFYHPGQEYNVRVASRYFKGPELLVDYQMYDYSLDMWSLGCMLASMIFRKEPFFHGHDNYDQLVRIAKVLGTEDLYDYIDKYNIELDPRFNDILGRHSRKRWERFVHSENQHLVSPEALDFLDKLLRYDHQSRLTAREAMEHPYFYTVVKDQARMSSTSMAGGSTPVSSANMMSGISSVPTPSPLGPLAGSPVIAAANSLGIPVPAAAGAQQ</sequence>
<dbReference type="EC" id="2.7.11.1" evidence="3"/>
<dbReference type="EMBL" id="U17112">
    <property type="protein sequence ID" value="AAA64563.1"/>
    <property type="molecule type" value="mRNA"/>
</dbReference>
<dbReference type="EMBL" id="AK146032">
    <property type="protein sequence ID" value="BAE26845.1"/>
    <property type="molecule type" value="mRNA"/>
</dbReference>
<dbReference type="EMBL" id="AK158077">
    <property type="protein sequence ID" value="BAE34350.1"/>
    <property type="molecule type" value="mRNA"/>
</dbReference>
<dbReference type="EMBL" id="AL831735">
    <property type="status" value="NOT_ANNOTATED_CDS"/>
    <property type="molecule type" value="Genomic_DNA"/>
</dbReference>
<dbReference type="EMBL" id="CH466551">
    <property type="protein sequence ID" value="EDL05953.1"/>
    <property type="molecule type" value="Genomic_DNA"/>
</dbReference>
<dbReference type="EMBL" id="BC026149">
    <property type="protein sequence ID" value="AAH26149.1"/>
    <property type="molecule type" value="mRNA"/>
</dbReference>
<dbReference type="EMBL" id="BC060742">
    <property type="protein sequence ID" value="AAH60742.1"/>
    <property type="molecule type" value="mRNA"/>
</dbReference>
<dbReference type="EMBL" id="BC089343">
    <property type="protein sequence ID" value="AAH89343.1"/>
    <property type="molecule type" value="mRNA"/>
</dbReference>
<dbReference type="CCDS" id="CCDS16879.1"/>
<dbReference type="PIR" id="I49141">
    <property type="entry name" value="I49141"/>
</dbReference>
<dbReference type="RefSeq" id="NP_001403894.1">
    <property type="nucleotide sequence ID" value="NM_001416965.1"/>
</dbReference>
<dbReference type="RefSeq" id="NP_001403895.1">
    <property type="nucleotide sequence ID" value="NM_001416966.1"/>
</dbReference>
<dbReference type="RefSeq" id="NP_001403896.1">
    <property type="nucleotide sequence ID" value="NM_001416967.1"/>
</dbReference>
<dbReference type="RefSeq" id="NP_001403897.1">
    <property type="nucleotide sequence ID" value="NM_001416968.1"/>
</dbReference>
<dbReference type="RefSeq" id="NP_001403898.1">
    <property type="nucleotide sequence ID" value="NM_001416969.1"/>
</dbReference>
<dbReference type="RefSeq" id="NP_001403899.1">
    <property type="nucleotide sequence ID" value="NM_001416970.1"/>
</dbReference>
<dbReference type="RefSeq" id="NP_001403900.1">
    <property type="nucleotide sequence ID" value="NM_001416971.1"/>
</dbReference>
<dbReference type="RefSeq" id="NP_031814.2">
    <property type="nucleotide sequence ID" value="NM_007788.3"/>
</dbReference>
<dbReference type="RefSeq" id="XP_006498720.1">
    <property type="nucleotide sequence ID" value="XM_006498657.3"/>
</dbReference>
<dbReference type="RefSeq" id="XP_011237574.1">
    <property type="nucleotide sequence ID" value="XM_011239272.4"/>
</dbReference>
<dbReference type="RefSeq" id="XP_030102934.1">
    <property type="nucleotide sequence ID" value="XM_030247074.2"/>
</dbReference>
<dbReference type="SMR" id="Q60737"/>
<dbReference type="BioGRID" id="198942">
    <property type="interactions" value="26"/>
</dbReference>
<dbReference type="CORUM" id="Q60737"/>
<dbReference type="DIP" id="DIP-32409N"/>
<dbReference type="FunCoup" id="Q60737">
    <property type="interactions" value="4811"/>
</dbReference>
<dbReference type="IntAct" id="Q60737">
    <property type="interactions" value="19"/>
</dbReference>
<dbReference type="MINT" id="Q60737"/>
<dbReference type="STRING" id="10090.ENSMUSP00000096829"/>
<dbReference type="ChEMBL" id="CHEMBL3537"/>
<dbReference type="GlyGen" id="Q60737">
    <property type="glycosylation" value="3 sites, 1 N-linked glycan (1 site), 1 O-linked glycan (1 site)"/>
</dbReference>
<dbReference type="iPTMnet" id="Q60737"/>
<dbReference type="PhosphoSitePlus" id="Q60737"/>
<dbReference type="SwissPalm" id="Q60737"/>
<dbReference type="jPOST" id="Q60737"/>
<dbReference type="PaxDb" id="10090-ENSMUSP00000096829"/>
<dbReference type="PeptideAtlas" id="Q60737"/>
<dbReference type="ProteomicsDB" id="279286"/>
<dbReference type="Pumba" id="Q60737"/>
<dbReference type="TopDownProteomics" id="Q60737"/>
<dbReference type="DNASU" id="12995"/>
<dbReference type="Ensembl" id="ENSMUST00000099224.10">
    <property type="protein sequence ID" value="ENSMUSP00000096829.4"/>
    <property type="gene ID" value="ENSMUSG00000074698.11"/>
</dbReference>
<dbReference type="GeneID" id="12995"/>
<dbReference type="KEGG" id="mmu:12995"/>
<dbReference type="UCSC" id="uc008nfa.2">
    <property type="organism name" value="mouse"/>
</dbReference>
<dbReference type="AGR" id="MGI:88543"/>
<dbReference type="CTD" id="1457"/>
<dbReference type="MGI" id="MGI:88543">
    <property type="gene designation" value="Csnk2a1"/>
</dbReference>
<dbReference type="VEuPathDB" id="HostDB:ENSMUSG00000074698"/>
<dbReference type="eggNOG" id="KOG0668">
    <property type="taxonomic scope" value="Eukaryota"/>
</dbReference>
<dbReference type="GeneTree" id="ENSGT00390000004215"/>
<dbReference type="HOGENOM" id="CLU_000288_70_4_1"/>
<dbReference type="InParanoid" id="Q60737"/>
<dbReference type="OMA" id="ECHMIEW"/>
<dbReference type="OrthoDB" id="10254671at2759"/>
<dbReference type="PhylomeDB" id="Q60737"/>
<dbReference type="TreeFam" id="TF300483"/>
<dbReference type="BRENDA" id="2.7.11.1">
    <property type="organism ID" value="3474"/>
</dbReference>
<dbReference type="Reactome" id="R-MMU-1483191">
    <property type="pathway name" value="Synthesis of PC"/>
</dbReference>
<dbReference type="Reactome" id="R-MMU-201688">
    <property type="pathway name" value="WNT mediated activation of DVL"/>
</dbReference>
<dbReference type="Reactome" id="R-MMU-2514853">
    <property type="pathway name" value="Condensation of Prometaphase Chromosomes"/>
</dbReference>
<dbReference type="Reactome" id="R-MMU-445144">
    <property type="pathway name" value="Signal transduction by L1"/>
</dbReference>
<dbReference type="Reactome" id="R-MMU-6804756">
    <property type="pathway name" value="Regulation of TP53 Activity through Phosphorylation"/>
</dbReference>
<dbReference type="Reactome" id="R-MMU-6814122">
    <property type="pathway name" value="Cooperation of PDCL (PhLP1) and TRiC/CCT in G-protein beta folding"/>
</dbReference>
<dbReference type="Reactome" id="R-MMU-8934903">
    <property type="pathway name" value="Receptor Mediated Mitophagy"/>
</dbReference>
<dbReference type="Reactome" id="R-MMU-8939243">
    <property type="pathway name" value="RUNX1 interacts with co-factors whose precise effect on RUNX1 targets is not known"/>
</dbReference>
<dbReference type="Reactome" id="R-MMU-8948751">
    <property type="pathway name" value="Regulation of PTEN stability and activity"/>
</dbReference>
<dbReference type="BioGRID-ORCS" id="12995">
    <property type="hits" value="7 hits in 83 CRISPR screens"/>
</dbReference>
<dbReference type="CD-CODE" id="CE726F99">
    <property type="entry name" value="Postsynaptic density"/>
</dbReference>
<dbReference type="ChiTaRS" id="Csnk2a1">
    <property type="organism name" value="mouse"/>
</dbReference>
<dbReference type="PRO" id="PR:Q60737"/>
<dbReference type="Proteomes" id="UP000000589">
    <property type="component" value="Chromosome 2"/>
</dbReference>
<dbReference type="RNAct" id="Q60737">
    <property type="molecule type" value="protein"/>
</dbReference>
<dbReference type="Bgee" id="ENSMUSG00000074698">
    <property type="expression patterns" value="Expressed in undifferentiated genital tubercle and 276 other cell types or tissues"/>
</dbReference>
<dbReference type="ExpressionAtlas" id="Q60737">
    <property type="expression patterns" value="baseline and differential"/>
</dbReference>
<dbReference type="GO" id="GO:0000785">
    <property type="term" value="C:chromatin"/>
    <property type="evidence" value="ECO:0007669"/>
    <property type="project" value="Ensembl"/>
</dbReference>
<dbReference type="GO" id="GO:0005829">
    <property type="term" value="C:cytosol"/>
    <property type="evidence" value="ECO:0000304"/>
    <property type="project" value="Reactome"/>
</dbReference>
<dbReference type="GO" id="GO:0005634">
    <property type="term" value="C:nucleus"/>
    <property type="evidence" value="ECO:0007669"/>
    <property type="project" value="UniProtKB-SubCell"/>
</dbReference>
<dbReference type="GO" id="GO:0005956">
    <property type="term" value="C:protein kinase CK2 complex"/>
    <property type="evidence" value="ECO:0000304"/>
    <property type="project" value="MGI"/>
</dbReference>
<dbReference type="GO" id="GO:0005524">
    <property type="term" value="F:ATP binding"/>
    <property type="evidence" value="ECO:0007669"/>
    <property type="project" value="UniProtKB-KW"/>
</dbReference>
<dbReference type="GO" id="GO:0008013">
    <property type="term" value="F:beta-catenin binding"/>
    <property type="evidence" value="ECO:0000314"/>
    <property type="project" value="MGI"/>
</dbReference>
<dbReference type="GO" id="GO:0016301">
    <property type="term" value="F:kinase activity"/>
    <property type="evidence" value="ECO:0000314"/>
    <property type="project" value="MGI"/>
</dbReference>
<dbReference type="GO" id="GO:0019888">
    <property type="term" value="F:protein phosphatase regulator activity"/>
    <property type="evidence" value="ECO:0000314"/>
    <property type="project" value="MGI"/>
</dbReference>
<dbReference type="GO" id="GO:0106310">
    <property type="term" value="F:protein serine kinase activity"/>
    <property type="evidence" value="ECO:0007669"/>
    <property type="project" value="RHEA"/>
</dbReference>
<dbReference type="GO" id="GO:0004674">
    <property type="term" value="F:protein serine/threonine kinase activity"/>
    <property type="evidence" value="ECO:0000250"/>
    <property type="project" value="UniProtKB"/>
</dbReference>
<dbReference type="GO" id="GO:0043021">
    <property type="term" value="F:ribonucleoprotein complex binding"/>
    <property type="evidence" value="ECO:0007669"/>
    <property type="project" value="Ensembl"/>
</dbReference>
<dbReference type="GO" id="GO:0006915">
    <property type="term" value="P:apoptotic process"/>
    <property type="evidence" value="ECO:0007669"/>
    <property type="project" value="UniProtKB-KW"/>
</dbReference>
<dbReference type="GO" id="GO:0021987">
    <property type="term" value="P:cerebral cortex development"/>
    <property type="evidence" value="ECO:0007669"/>
    <property type="project" value="Ensembl"/>
</dbReference>
<dbReference type="GO" id="GO:0006302">
    <property type="term" value="P:double-strand break repair"/>
    <property type="evidence" value="ECO:0000250"/>
    <property type="project" value="UniProtKB"/>
</dbReference>
<dbReference type="GO" id="GO:0097421">
    <property type="term" value="P:liver regeneration"/>
    <property type="evidence" value="ECO:0007669"/>
    <property type="project" value="Ensembl"/>
</dbReference>
<dbReference type="GO" id="GO:2001234">
    <property type="term" value="P:negative regulation of apoptotic signaling pathway"/>
    <property type="evidence" value="ECO:0000250"/>
    <property type="project" value="UniProtKB"/>
</dbReference>
<dbReference type="GO" id="GO:2000042">
    <property type="term" value="P:negative regulation of double-strand break repair via homologous recombination"/>
    <property type="evidence" value="ECO:0000250"/>
    <property type="project" value="UniProtKB"/>
</dbReference>
<dbReference type="GO" id="GO:1905337">
    <property type="term" value="P:positive regulation of aggrephagy"/>
    <property type="evidence" value="ECO:0000250"/>
    <property type="project" value="UniProtKB"/>
</dbReference>
<dbReference type="GO" id="GO:0030307">
    <property type="term" value="P:positive regulation of cell growth"/>
    <property type="evidence" value="ECO:0000250"/>
    <property type="project" value="UniProtKB"/>
</dbReference>
<dbReference type="GO" id="GO:0008284">
    <property type="term" value="P:positive regulation of cell population proliferation"/>
    <property type="evidence" value="ECO:0000250"/>
    <property type="project" value="UniProtKB"/>
</dbReference>
<dbReference type="GO" id="GO:0045732">
    <property type="term" value="P:positive regulation of protein catabolic process"/>
    <property type="evidence" value="ECO:0000250"/>
    <property type="project" value="UniProtKB"/>
</dbReference>
<dbReference type="GO" id="GO:0030177">
    <property type="term" value="P:positive regulation of Wnt signaling pathway"/>
    <property type="evidence" value="ECO:0000250"/>
    <property type="project" value="UniProtKB"/>
</dbReference>
<dbReference type="GO" id="GO:1905818">
    <property type="term" value="P:regulation of chromosome separation"/>
    <property type="evidence" value="ECO:0000250"/>
    <property type="project" value="UniProtKB"/>
</dbReference>
<dbReference type="GO" id="GO:1903076">
    <property type="term" value="P:regulation of protein localization to plasma membrane"/>
    <property type="evidence" value="ECO:0007669"/>
    <property type="project" value="Ensembl"/>
</dbReference>
<dbReference type="GO" id="GO:0033574">
    <property type="term" value="P:response to testosterone"/>
    <property type="evidence" value="ECO:0007669"/>
    <property type="project" value="Ensembl"/>
</dbReference>
<dbReference type="GO" id="GO:0048511">
    <property type="term" value="P:rhythmic process"/>
    <property type="evidence" value="ECO:0007669"/>
    <property type="project" value="UniProtKB-KW"/>
</dbReference>
<dbReference type="GO" id="GO:0016055">
    <property type="term" value="P:Wnt signaling pathway"/>
    <property type="evidence" value="ECO:0007669"/>
    <property type="project" value="UniProtKB-KW"/>
</dbReference>
<dbReference type="CDD" id="cd14132">
    <property type="entry name" value="STKc_CK2_alpha"/>
    <property type="match status" value="1"/>
</dbReference>
<dbReference type="FunFam" id="1.10.510.10:FF:000059">
    <property type="entry name" value="Casein kinase II subunit alpha"/>
    <property type="match status" value="1"/>
</dbReference>
<dbReference type="FunFam" id="3.30.200.20:FF:000088">
    <property type="entry name" value="Casein kinase II subunit alpha"/>
    <property type="match status" value="1"/>
</dbReference>
<dbReference type="Gene3D" id="3.30.200.20">
    <property type="entry name" value="Phosphorylase Kinase, domain 1"/>
    <property type="match status" value="1"/>
</dbReference>
<dbReference type="Gene3D" id="1.10.510.10">
    <property type="entry name" value="Transferase(Phosphotransferase) domain 1"/>
    <property type="match status" value="1"/>
</dbReference>
<dbReference type="InterPro" id="IPR045216">
    <property type="entry name" value="CK2_alpha"/>
</dbReference>
<dbReference type="InterPro" id="IPR011009">
    <property type="entry name" value="Kinase-like_dom_sf"/>
</dbReference>
<dbReference type="InterPro" id="IPR000719">
    <property type="entry name" value="Prot_kinase_dom"/>
</dbReference>
<dbReference type="InterPro" id="IPR017441">
    <property type="entry name" value="Protein_kinase_ATP_BS"/>
</dbReference>
<dbReference type="InterPro" id="IPR008271">
    <property type="entry name" value="Ser/Thr_kinase_AS"/>
</dbReference>
<dbReference type="PANTHER" id="PTHR24054">
    <property type="entry name" value="CASEIN KINASE II SUBUNIT ALPHA"/>
    <property type="match status" value="1"/>
</dbReference>
<dbReference type="PANTHER" id="PTHR24054:SF16">
    <property type="entry name" value="CASEIN KINASE II SUBUNIT ALPHA-RELATED"/>
    <property type="match status" value="1"/>
</dbReference>
<dbReference type="Pfam" id="PF00069">
    <property type="entry name" value="Pkinase"/>
    <property type="match status" value="1"/>
</dbReference>
<dbReference type="SMART" id="SM00220">
    <property type="entry name" value="S_TKc"/>
    <property type="match status" value="1"/>
</dbReference>
<dbReference type="SUPFAM" id="SSF56112">
    <property type="entry name" value="Protein kinase-like (PK-like)"/>
    <property type="match status" value="1"/>
</dbReference>
<dbReference type="PROSITE" id="PS00107">
    <property type="entry name" value="PROTEIN_KINASE_ATP"/>
    <property type="match status" value="1"/>
</dbReference>
<dbReference type="PROSITE" id="PS50011">
    <property type="entry name" value="PROTEIN_KINASE_DOM"/>
    <property type="match status" value="1"/>
</dbReference>
<dbReference type="PROSITE" id="PS00108">
    <property type="entry name" value="PROTEIN_KINASE_ST"/>
    <property type="match status" value="1"/>
</dbReference>
<accession>Q60737</accession>
<accession>Q8R0X4</accession>
<reference key="1">
    <citation type="journal article" date="1995" name="Science">
        <title>Casein kinase II alpha transgene-induced murine lymphoma: relation to theileriosis in cattle.</title>
        <authorList>
            <person name="Seldin D.C."/>
            <person name="Leder P."/>
        </authorList>
    </citation>
    <scope>NUCLEOTIDE SEQUENCE [MRNA]</scope>
    <source>
        <strain>FVB/N</strain>
        <tissue>Spleen</tissue>
    </source>
</reference>
<reference key="2">
    <citation type="journal article" date="2005" name="Science">
        <title>The transcriptional landscape of the mammalian genome.</title>
        <authorList>
            <person name="Carninci P."/>
            <person name="Kasukawa T."/>
            <person name="Katayama S."/>
            <person name="Gough J."/>
            <person name="Frith M.C."/>
            <person name="Maeda N."/>
            <person name="Oyama R."/>
            <person name="Ravasi T."/>
            <person name="Lenhard B."/>
            <person name="Wells C."/>
            <person name="Kodzius R."/>
            <person name="Shimokawa K."/>
            <person name="Bajic V.B."/>
            <person name="Brenner S.E."/>
            <person name="Batalov S."/>
            <person name="Forrest A.R."/>
            <person name="Zavolan M."/>
            <person name="Davis M.J."/>
            <person name="Wilming L.G."/>
            <person name="Aidinis V."/>
            <person name="Allen J.E."/>
            <person name="Ambesi-Impiombato A."/>
            <person name="Apweiler R."/>
            <person name="Aturaliya R.N."/>
            <person name="Bailey T.L."/>
            <person name="Bansal M."/>
            <person name="Baxter L."/>
            <person name="Beisel K.W."/>
            <person name="Bersano T."/>
            <person name="Bono H."/>
            <person name="Chalk A.M."/>
            <person name="Chiu K.P."/>
            <person name="Choudhary V."/>
            <person name="Christoffels A."/>
            <person name="Clutterbuck D.R."/>
            <person name="Crowe M.L."/>
            <person name="Dalla E."/>
            <person name="Dalrymple B.P."/>
            <person name="de Bono B."/>
            <person name="Della Gatta G."/>
            <person name="di Bernardo D."/>
            <person name="Down T."/>
            <person name="Engstrom P."/>
            <person name="Fagiolini M."/>
            <person name="Faulkner G."/>
            <person name="Fletcher C.F."/>
            <person name="Fukushima T."/>
            <person name="Furuno M."/>
            <person name="Futaki S."/>
            <person name="Gariboldi M."/>
            <person name="Georgii-Hemming P."/>
            <person name="Gingeras T.R."/>
            <person name="Gojobori T."/>
            <person name="Green R.E."/>
            <person name="Gustincich S."/>
            <person name="Harbers M."/>
            <person name="Hayashi Y."/>
            <person name="Hensch T.K."/>
            <person name="Hirokawa N."/>
            <person name="Hill D."/>
            <person name="Huminiecki L."/>
            <person name="Iacono M."/>
            <person name="Ikeo K."/>
            <person name="Iwama A."/>
            <person name="Ishikawa T."/>
            <person name="Jakt M."/>
            <person name="Kanapin A."/>
            <person name="Katoh M."/>
            <person name="Kawasawa Y."/>
            <person name="Kelso J."/>
            <person name="Kitamura H."/>
            <person name="Kitano H."/>
            <person name="Kollias G."/>
            <person name="Krishnan S.P."/>
            <person name="Kruger A."/>
            <person name="Kummerfeld S.K."/>
            <person name="Kurochkin I.V."/>
            <person name="Lareau L.F."/>
            <person name="Lazarevic D."/>
            <person name="Lipovich L."/>
            <person name="Liu J."/>
            <person name="Liuni S."/>
            <person name="McWilliam S."/>
            <person name="Madan Babu M."/>
            <person name="Madera M."/>
            <person name="Marchionni L."/>
            <person name="Matsuda H."/>
            <person name="Matsuzawa S."/>
            <person name="Miki H."/>
            <person name="Mignone F."/>
            <person name="Miyake S."/>
            <person name="Morris K."/>
            <person name="Mottagui-Tabar S."/>
            <person name="Mulder N."/>
            <person name="Nakano N."/>
            <person name="Nakauchi H."/>
            <person name="Ng P."/>
            <person name="Nilsson R."/>
            <person name="Nishiguchi S."/>
            <person name="Nishikawa S."/>
            <person name="Nori F."/>
            <person name="Ohara O."/>
            <person name="Okazaki Y."/>
            <person name="Orlando V."/>
            <person name="Pang K.C."/>
            <person name="Pavan W.J."/>
            <person name="Pavesi G."/>
            <person name="Pesole G."/>
            <person name="Petrovsky N."/>
            <person name="Piazza S."/>
            <person name="Reed J."/>
            <person name="Reid J.F."/>
            <person name="Ring B.Z."/>
            <person name="Ringwald M."/>
            <person name="Rost B."/>
            <person name="Ruan Y."/>
            <person name="Salzberg S.L."/>
            <person name="Sandelin A."/>
            <person name="Schneider C."/>
            <person name="Schoenbach C."/>
            <person name="Sekiguchi K."/>
            <person name="Semple C.A."/>
            <person name="Seno S."/>
            <person name="Sessa L."/>
            <person name="Sheng Y."/>
            <person name="Shibata Y."/>
            <person name="Shimada H."/>
            <person name="Shimada K."/>
            <person name="Silva D."/>
            <person name="Sinclair B."/>
            <person name="Sperling S."/>
            <person name="Stupka E."/>
            <person name="Sugiura K."/>
            <person name="Sultana R."/>
            <person name="Takenaka Y."/>
            <person name="Taki K."/>
            <person name="Tammoja K."/>
            <person name="Tan S.L."/>
            <person name="Tang S."/>
            <person name="Taylor M.S."/>
            <person name="Tegner J."/>
            <person name="Teichmann S.A."/>
            <person name="Ueda H.R."/>
            <person name="van Nimwegen E."/>
            <person name="Verardo R."/>
            <person name="Wei C.L."/>
            <person name="Yagi K."/>
            <person name="Yamanishi H."/>
            <person name="Zabarovsky E."/>
            <person name="Zhu S."/>
            <person name="Zimmer A."/>
            <person name="Hide W."/>
            <person name="Bult C."/>
            <person name="Grimmond S.M."/>
            <person name="Teasdale R.D."/>
            <person name="Liu E.T."/>
            <person name="Brusic V."/>
            <person name="Quackenbush J."/>
            <person name="Wahlestedt C."/>
            <person name="Mattick J.S."/>
            <person name="Hume D.A."/>
            <person name="Kai C."/>
            <person name="Sasaki D."/>
            <person name="Tomaru Y."/>
            <person name="Fukuda S."/>
            <person name="Kanamori-Katayama M."/>
            <person name="Suzuki M."/>
            <person name="Aoki J."/>
            <person name="Arakawa T."/>
            <person name="Iida J."/>
            <person name="Imamura K."/>
            <person name="Itoh M."/>
            <person name="Kato T."/>
            <person name="Kawaji H."/>
            <person name="Kawagashira N."/>
            <person name="Kawashima T."/>
            <person name="Kojima M."/>
            <person name="Kondo S."/>
            <person name="Konno H."/>
            <person name="Nakano K."/>
            <person name="Ninomiya N."/>
            <person name="Nishio T."/>
            <person name="Okada M."/>
            <person name="Plessy C."/>
            <person name="Shibata K."/>
            <person name="Shiraki T."/>
            <person name="Suzuki S."/>
            <person name="Tagami M."/>
            <person name="Waki K."/>
            <person name="Watahiki A."/>
            <person name="Okamura-Oho Y."/>
            <person name="Suzuki H."/>
            <person name="Kawai J."/>
            <person name="Hayashizaki Y."/>
        </authorList>
    </citation>
    <scope>NUCLEOTIDE SEQUENCE [LARGE SCALE MRNA]</scope>
    <source>
        <strain>C57BL/6J</strain>
        <tissue>Inner ear</tissue>
        <tissue>Liver</tissue>
    </source>
</reference>
<reference key="3">
    <citation type="journal article" date="2009" name="PLoS Biol.">
        <title>Lineage-specific biology revealed by a finished genome assembly of the mouse.</title>
        <authorList>
            <person name="Church D.M."/>
            <person name="Goodstadt L."/>
            <person name="Hillier L.W."/>
            <person name="Zody M.C."/>
            <person name="Goldstein S."/>
            <person name="She X."/>
            <person name="Bult C.J."/>
            <person name="Agarwala R."/>
            <person name="Cherry J.L."/>
            <person name="DiCuccio M."/>
            <person name="Hlavina W."/>
            <person name="Kapustin Y."/>
            <person name="Meric P."/>
            <person name="Maglott D."/>
            <person name="Birtle Z."/>
            <person name="Marques A.C."/>
            <person name="Graves T."/>
            <person name="Zhou S."/>
            <person name="Teague B."/>
            <person name="Potamousis K."/>
            <person name="Churas C."/>
            <person name="Place M."/>
            <person name="Herschleb J."/>
            <person name="Runnheim R."/>
            <person name="Forrest D."/>
            <person name="Amos-Landgraf J."/>
            <person name="Schwartz D.C."/>
            <person name="Cheng Z."/>
            <person name="Lindblad-Toh K."/>
            <person name="Eichler E.E."/>
            <person name="Ponting C.P."/>
        </authorList>
    </citation>
    <scope>NUCLEOTIDE SEQUENCE [LARGE SCALE GENOMIC DNA]</scope>
    <source>
        <strain>C57BL/6J</strain>
    </source>
</reference>
<reference key="4">
    <citation type="submission" date="2005-07" db="EMBL/GenBank/DDBJ databases">
        <authorList>
            <person name="Mural R.J."/>
            <person name="Adams M.D."/>
            <person name="Myers E.W."/>
            <person name="Smith H.O."/>
            <person name="Venter J.C."/>
        </authorList>
    </citation>
    <scope>NUCLEOTIDE SEQUENCE [LARGE SCALE GENOMIC DNA]</scope>
</reference>
<reference key="5">
    <citation type="journal article" date="2004" name="Genome Res.">
        <title>The status, quality, and expansion of the NIH full-length cDNA project: the Mammalian Gene Collection (MGC).</title>
        <authorList>
            <consortium name="The MGC Project Team"/>
        </authorList>
    </citation>
    <scope>NUCLEOTIDE SEQUENCE [LARGE SCALE MRNA]</scope>
    <source>
        <strain>C57BL/6J</strain>
        <strain>FVB/N</strain>
        <tissue>Mammary tumor</tissue>
    </source>
</reference>
<reference key="6">
    <citation type="journal article" date="2000" name="J. Biol. Chem.">
        <title>Endogenous protein kinase CK2 participates in Wnt signaling in mammary epithelial cells.</title>
        <authorList>
            <person name="Song D.H."/>
            <person name="Sussman D.J."/>
            <person name="Seldin D.C."/>
        </authorList>
    </citation>
    <scope>FUNCTION</scope>
</reference>
<reference key="7">
    <citation type="journal article" date="2008" name="J. Biol. Chem.">
        <title>Phosphorylation of murine caspase-9 by the protein kinase casein kinase 2 regulates its cleavage by caspase-8.</title>
        <authorList>
            <person name="McDonnell M.A."/>
            <person name="Abedin M.J."/>
            <person name="Melendez M."/>
            <person name="Platikanova T.N."/>
            <person name="Ecklund J.R."/>
            <person name="Ahmed K."/>
            <person name="Kelekar A."/>
        </authorList>
    </citation>
    <scope>FUNCTION IN APOPTOSIS</scope>
</reference>
<reference key="8">
    <citation type="journal article" date="2008" name="Mol. Cell. Biol.">
        <title>The alpha catalytic subunit of protein kinase CK2 is required for mouse embryonic development.</title>
        <authorList>
            <person name="Lou D.Y."/>
            <person name="Dominguez I."/>
            <person name="Toselli P."/>
            <person name="Landesman-Bollag E."/>
            <person name="O'Brien C."/>
            <person name="Seldin D.C."/>
        </authorList>
    </citation>
    <scope>DISRUPTION PHENOTYPE</scope>
</reference>
<reference key="9">
    <citation type="journal article" date="2010" name="Cell">
        <title>A tissue-specific atlas of mouse protein phosphorylation and expression.</title>
        <authorList>
            <person name="Huttlin E.L."/>
            <person name="Jedrychowski M.P."/>
            <person name="Elias J.E."/>
            <person name="Goswami T."/>
            <person name="Rad R."/>
            <person name="Beausoleil S.A."/>
            <person name="Villen J."/>
            <person name="Haas W."/>
            <person name="Sowa M.E."/>
            <person name="Gygi S.P."/>
        </authorList>
    </citation>
    <scope>IDENTIFICATION BY MASS SPECTROMETRY [LARGE SCALE ANALYSIS]</scope>
    <source>
        <tissue>Brain</tissue>
        <tissue>Brown adipose tissue</tissue>
        <tissue>Heart</tissue>
        <tissue>Kidney</tissue>
        <tissue>Liver</tissue>
        <tissue>Lung</tissue>
        <tissue>Pancreas</tissue>
        <tissue>Spleen</tissue>
        <tissue>Testis</tissue>
    </source>
</reference>
<reference key="10">
    <citation type="journal article" date="2010" name="Mol. Biol. Cell">
        <title>Phosphorylation of serine 11 and serine 92 as new positive regulators of human Snail1 function: potential involvement of casein kinase-2 and the cAMP-activated kinase protein kinase A.</title>
        <authorList>
            <person name="MacPherson M.R."/>
            <person name="Molina P."/>
            <person name="Souchelnytskyi S."/>
            <person name="Wernstedt C."/>
            <person name="Martin-Perez J."/>
            <person name="Portillo F."/>
            <person name="Cano A."/>
        </authorList>
    </citation>
    <scope>INTERACTION WITH SNAI1</scope>
</reference>
<organism>
    <name type="scientific">Mus musculus</name>
    <name type="common">Mouse</name>
    <dbReference type="NCBI Taxonomy" id="10090"/>
    <lineage>
        <taxon>Eukaryota</taxon>
        <taxon>Metazoa</taxon>
        <taxon>Chordata</taxon>
        <taxon>Craniata</taxon>
        <taxon>Vertebrata</taxon>
        <taxon>Euteleostomi</taxon>
        <taxon>Mammalia</taxon>
        <taxon>Eutheria</taxon>
        <taxon>Euarchontoglires</taxon>
        <taxon>Glires</taxon>
        <taxon>Rodentia</taxon>
        <taxon>Myomorpha</taxon>
        <taxon>Muroidea</taxon>
        <taxon>Muridae</taxon>
        <taxon>Murinae</taxon>
        <taxon>Mus</taxon>
        <taxon>Mus</taxon>
    </lineage>
</organism>